<dbReference type="EC" id="2.7.11.22"/>
<dbReference type="EC" id="2.7.11.23"/>
<dbReference type="EMBL" id="X97640">
    <property type="protein sequence ID" value="CAA66236.1"/>
    <property type="molecule type" value="mRNA"/>
</dbReference>
<dbReference type="PIR" id="T17118">
    <property type="entry name" value="T17118"/>
</dbReference>
<dbReference type="SMR" id="Q38775"/>
<dbReference type="BRENDA" id="2.7.11.22">
    <property type="organism ID" value="376"/>
</dbReference>
<dbReference type="GO" id="GO:0000307">
    <property type="term" value="C:cyclin-dependent protein kinase holoenzyme complex"/>
    <property type="evidence" value="ECO:0007669"/>
    <property type="project" value="TreeGrafter"/>
</dbReference>
<dbReference type="GO" id="GO:0005737">
    <property type="term" value="C:cytoplasm"/>
    <property type="evidence" value="ECO:0007669"/>
    <property type="project" value="TreeGrafter"/>
</dbReference>
<dbReference type="GO" id="GO:0005634">
    <property type="term" value="C:nucleus"/>
    <property type="evidence" value="ECO:0007669"/>
    <property type="project" value="TreeGrafter"/>
</dbReference>
<dbReference type="GO" id="GO:0005524">
    <property type="term" value="F:ATP binding"/>
    <property type="evidence" value="ECO:0007669"/>
    <property type="project" value="UniProtKB-KW"/>
</dbReference>
<dbReference type="GO" id="GO:0030332">
    <property type="term" value="F:cyclin binding"/>
    <property type="evidence" value="ECO:0007669"/>
    <property type="project" value="TreeGrafter"/>
</dbReference>
<dbReference type="GO" id="GO:0004693">
    <property type="term" value="F:cyclin-dependent protein serine/threonine kinase activity"/>
    <property type="evidence" value="ECO:0007669"/>
    <property type="project" value="UniProtKB-EC"/>
</dbReference>
<dbReference type="GO" id="GO:0106310">
    <property type="term" value="F:protein serine kinase activity"/>
    <property type="evidence" value="ECO:0007669"/>
    <property type="project" value="RHEA"/>
</dbReference>
<dbReference type="GO" id="GO:0008353">
    <property type="term" value="F:RNA polymerase II CTD heptapeptide repeat kinase activity"/>
    <property type="evidence" value="ECO:0007669"/>
    <property type="project" value="UniProtKB-EC"/>
</dbReference>
<dbReference type="GO" id="GO:0051301">
    <property type="term" value="P:cell division"/>
    <property type="evidence" value="ECO:0007669"/>
    <property type="project" value="UniProtKB-KW"/>
</dbReference>
<dbReference type="GO" id="GO:0000082">
    <property type="term" value="P:G1/S transition of mitotic cell cycle"/>
    <property type="evidence" value="ECO:0007669"/>
    <property type="project" value="TreeGrafter"/>
</dbReference>
<dbReference type="GO" id="GO:0010389">
    <property type="term" value="P:regulation of G2/M transition of mitotic cell cycle"/>
    <property type="evidence" value="ECO:0007669"/>
    <property type="project" value="TreeGrafter"/>
</dbReference>
<dbReference type="GO" id="GO:0007165">
    <property type="term" value="P:signal transduction"/>
    <property type="evidence" value="ECO:0007669"/>
    <property type="project" value="TreeGrafter"/>
</dbReference>
<dbReference type="FunFam" id="1.10.510.10:FF:000281">
    <property type="entry name" value="Cyclin-dependent kinase 2"/>
    <property type="match status" value="1"/>
</dbReference>
<dbReference type="FunFam" id="3.30.200.20:FF:000231">
    <property type="entry name" value="Cyclin-dependent kinase B2,2"/>
    <property type="match status" value="1"/>
</dbReference>
<dbReference type="Gene3D" id="3.30.200.20">
    <property type="entry name" value="Phosphorylase Kinase, domain 1"/>
    <property type="match status" value="1"/>
</dbReference>
<dbReference type="Gene3D" id="1.10.510.10">
    <property type="entry name" value="Transferase(Phosphotransferase) domain 1"/>
    <property type="match status" value="1"/>
</dbReference>
<dbReference type="InterPro" id="IPR050108">
    <property type="entry name" value="CDK"/>
</dbReference>
<dbReference type="InterPro" id="IPR011009">
    <property type="entry name" value="Kinase-like_dom_sf"/>
</dbReference>
<dbReference type="InterPro" id="IPR000719">
    <property type="entry name" value="Prot_kinase_dom"/>
</dbReference>
<dbReference type="InterPro" id="IPR017441">
    <property type="entry name" value="Protein_kinase_ATP_BS"/>
</dbReference>
<dbReference type="InterPro" id="IPR008271">
    <property type="entry name" value="Ser/Thr_kinase_AS"/>
</dbReference>
<dbReference type="PANTHER" id="PTHR24056">
    <property type="entry name" value="CELL DIVISION PROTEIN KINASE"/>
    <property type="match status" value="1"/>
</dbReference>
<dbReference type="PANTHER" id="PTHR24056:SF178">
    <property type="entry name" value="CYCLIN-DEPENDENT KINASE B2-2"/>
    <property type="match status" value="1"/>
</dbReference>
<dbReference type="Pfam" id="PF00069">
    <property type="entry name" value="Pkinase"/>
    <property type="match status" value="1"/>
</dbReference>
<dbReference type="SMART" id="SM00220">
    <property type="entry name" value="S_TKc"/>
    <property type="match status" value="1"/>
</dbReference>
<dbReference type="SUPFAM" id="SSF56112">
    <property type="entry name" value="Protein kinase-like (PK-like)"/>
    <property type="match status" value="1"/>
</dbReference>
<dbReference type="PROSITE" id="PS00107">
    <property type="entry name" value="PROTEIN_KINASE_ATP"/>
    <property type="match status" value="1"/>
</dbReference>
<dbReference type="PROSITE" id="PS50011">
    <property type="entry name" value="PROTEIN_KINASE_DOM"/>
    <property type="match status" value="1"/>
</dbReference>
<dbReference type="PROSITE" id="PS00108">
    <property type="entry name" value="PROTEIN_KINASE_ST"/>
    <property type="match status" value="1"/>
</dbReference>
<comment type="function">
    <text>Plays a key role in the control of the eukaryotic cell cycle.</text>
</comment>
<comment type="catalytic activity">
    <reaction>
        <text>L-seryl-[protein] + ATP = O-phospho-L-seryl-[protein] + ADP + H(+)</text>
        <dbReference type="Rhea" id="RHEA:17989"/>
        <dbReference type="Rhea" id="RHEA-COMP:9863"/>
        <dbReference type="Rhea" id="RHEA-COMP:11604"/>
        <dbReference type="ChEBI" id="CHEBI:15378"/>
        <dbReference type="ChEBI" id="CHEBI:29999"/>
        <dbReference type="ChEBI" id="CHEBI:30616"/>
        <dbReference type="ChEBI" id="CHEBI:83421"/>
        <dbReference type="ChEBI" id="CHEBI:456216"/>
        <dbReference type="EC" id="2.7.11.22"/>
    </reaction>
</comment>
<comment type="catalytic activity">
    <reaction>
        <text>L-threonyl-[protein] + ATP = O-phospho-L-threonyl-[protein] + ADP + H(+)</text>
        <dbReference type="Rhea" id="RHEA:46608"/>
        <dbReference type="Rhea" id="RHEA-COMP:11060"/>
        <dbReference type="Rhea" id="RHEA-COMP:11605"/>
        <dbReference type="ChEBI" id="CHEBI:15378"/>
        <dbReference type="ChEBI" id="CHEBI:30013"/>
        <dbReference type="ChEBI" id="CHEBI:30616"/>
        <dbReference type="ChEBI" id="CHEBI:61977"/>
        <dbReference type="ChEBI" id="CHEBI:456216"/>
        <dbReference type="EC" id="2.7.11.22"/>
    </reaction>
</comment>
<comment type="catalytic activity">
    <reaction>
        <text>[DNA-directed RNA polymerase] + ATP = phospho-[DNA-directed RNA polymerase] + ADP + H(+)</text>
        <dbReference type="Rhea" id="RHEA:10216"/>
        <dbReference type="Rhea" id="RHEA-COMP:11321"/>
        <dbReference type="Rhea" id="RHEA-COMP:11322"/>
        <dbReference type="ChEBI" id="CHEBI:15378"/>
        <dbReference type="ChEBI" id="CHEBI:30616"/>
        <dbReference type="ChEBI" id="CHEBI:43176"/>
        <dbReference type="ChEBI" id="CHEBI:68546"/>
        <dbReference type="ChEBI" id="CHEBI:456216"/>
        <dbReference type="EC" id="2.7.11.23"/>
    </reaction>
</comment>
<comment type="developmental stage">
    <text>Expression specific to the G2 and M phases.</text>
</comment>
<comment type="similarity">
    <text evidence="4">Belongs to the protein kinase superfamily. CMGC Ser/Thr protein kinase family. CDC2/CDKX subfamily.</text>
</comment>
<accession>Q38775</accession>
<organism>
    <name type="scientific">Antirrhinum majus</name>
    <name type="common">Garden snapdragon</name>
    <dbReference type="NCBI Taxonomy" id="4151"/>
    <lineage>
        <taxon>Eukaryota</taxon>
        <taxon>Viridiplantae</taxon>
        <taxon>Streptophyta</taxon>
        <taxon>Embryophyta</taxon>
        <taxon>Tracheophyta</taxon>
        <taxon>Spermatophyta</taxon>
        <taxon>Magnoliopsida</taxon>
        <taxon>eudicotyledons</taxon>
        <taxon>Gunneridae</taxon>
        <taxon>Pentapetalae</taxon>
        <taxon>asterids</taxon>
        <taxon>lamiids</taxon>
        <taxon>Lamiales</taxon>
        <taxon>Plantaginaceae</taxon>
        <taxon>Antirrhineae</taxon>
        <taxon>Antirrhinum</taxon>
    </lineage>
</organism>
<protein>
    <recommendedName>
        <fullName>Cell division control protein 2 homolog D</fullName>
        <ecNumber>2.7.11.22</ecNumber>
        <ecNumber>2.7.11.23</ecNumber>
    </recommendedName>
</protein>
<evidence type="ECO:0000250" key="1"/>
<evidence type="ECO:0000255" key="2">
    <source>
        <dbReference type="PROSITE-ProRule" id="PRU00159"/>
    </source>
</evidence>
<evidence type="ECO:0000255" key="3">
    <source>
        <dbReference type="PROSITE-ProRule" id="PRU10027"/>
    </source>
</evidence>
<evidence type="ECO:0000305" key="4"/>
<reference key="1">
    <citation type="journal article" date="1996" name="Plant Cell">
        <title>Distinct classes of cdc2-related genes are differentially expressed during the cell division cycle in plants.</title>
        <authorList>
            <person name="Fobert P.R."/>
            <person name="Gaudin V."/>
            <person name="Lunness P."/>
            <person name="Coen E.S."/>
            <person name="Doonan J.H."/>
        </authorList>
    </citation>
    <scope>NUCLEOTIDE SEQUENCE [MRNA]</scope>
    <source>
        <tissue>Flower</tissue>
    </source>
</reference>
<proteinExistence type="evidence at transcript level"/>
<name>CDC2D_ANTMA</name>
<gene>
    <name type="primary">CDC2D</name>
</gene>
<feature type="chain" id="PRO_0000085748" description="Cell division control protein 2 homolog D">
    <location>
        <begin position="1"/>
        <end position="312"/>
    </location>
</feature>
<feature type="domain" description="Protein kinase" evidence="2">
    <location>
        <begin position="14"/>
        <end position="304"/>
    </location>
</feature>
<feature type="active site" description="Proton acceptor" evidence="2 3">
    <location>
        <position position="145"/>
    </location>
</feature>
<feature type="binding site" evidence="2">
    <location>
        <begin position="20"/>
        <end position="28"/>
    </location>
    <ligand>
        <name>ATP</name>
        <dbReference type="ChEBI" id="CHEBI:30616"/>
    </ligand>
</feature>
<feature type="binding site" evidence="2">
    <location>
        <position position="43"/>
    </location>
    <ligand>
        <name>ATP</name>
        <dbReference type="ChEBI" id="CHEBI:30616"/>
    </ligand>
</feature>
<feature type="modified residue" description="Phosphothreonine" evidence="1">
    <location>
        <position position="24"/>
    </location>
</feature>
<feature type="modified residue" description="Phosphotyrosine" evidence="1">
    <location>
        <position position="25"/>
    </location>
</feature>
<feature type="modified residue" description="Phosphothreonine; by CAK" evidence="1">
    <location>
        <position position="179"/>
    </location>
</feature>
<sequence>MAEEKSKSSAMDAFVKLEKVGEGTYGKVYRAMEKSTGKIVALKKTRLHEDEEGVPPTTLREVSLLRMLSRDPHVVRLLDVKQGQNKEGKTVLYLVFEYMDTDLKKYIRSFKQTGESIAPMNVKSLMYQLCKGVAFCHGHGVLHRDLKPHNLLMDRKTMMLKIADLGLARAYTLPIKKYTHEILTLWYRAPEVLLGATHYSPAVDMWSVACIFAELVTQKALFPGDSELQQLLHIFRLLGTPNEEIWPGVSTLVDWHEYPQWTAQPISSAVPGLDEKGLNLLSEMLHYEPSRRISAKKAMEHPYFDELDKSGL</sequence>
<keyword id="KW-0067">ATP-binding</keyword>
<keyword id="KW-0131">Cell cycle</keyword>
<keyword id="KW-0132">Cell division</keyword>
<keyword id="KW-0418">Kinase</keyword>
<keyword id="KW-0498">Mitosis</keyword>
<keyword id="KW-0547">Nucleotide-binding</keyword>
<keyword id="KW-0597">Phosphoprotein</keyword>
<keyword id="KW-0723">Serine/threonine-protein kinase</keyword>
<keyword id="KW-0808">Transferase</keyword>